<protein>
    <recommendedName>
        <fullName evidence="1">Chaperone protein DnaK</fullName>
    </recommendedName>
    <alternativeName>
        <fullName evidence="1">HSP70</fullName>
    </alternativeName>
    <alternativeName>
        <fullName evidence="1">Heat shock 70 kDa protein</fullName>
    </alternativeName>
    <alternativeName>
        <fullName evidence="1">Heat shock protein 70</fullName>
    </alternativeName>
</protein>
<gene>
    <name evidence="1" type="primary">dnaK</name>
    <name type="ordered locus">A1S_2960</name>
</gene>
<sequence length="646" mass="69404">MAKIIGIDLGTTNSCVAVLEGDKVKVIENAEGARTTPSIIAYKDGEILVGQSAKRQAVTNPKNTLFAIKRLIGRRYEDQAVQKDIGLVPYKIIKADNGDAWVEVNDKKLAPQQISAEILKKMKKTAEDYLGETVTEAVITVPAYFNDAQRQATKDAGKIAGLDVKRIINEPTAAALAFGMDKKEGDRKVAVYDLGGGTFDVSIIEIADLDGDQQIEVLSTNGDTFLGGEDFDNALIEYLVEEFKKEQNVNLKNDPLALQRLKEAAEKAKIELSSSNATEINLPYITADATGPKHLVINVTRAKLEGLVADLVARTIEPCKIALKDAGLSTSDISDVILVGGQSRMPLVQQKVQEFFGREPRKDVNPDEAVAIGAAIQGAVLSGDKNDVLLLDVTPLTLGIETMGGVLTPIIEKNTTIPAKKSQVFSTAADNQPAVDISVYQGERKMAQQNKLLGNFQLGDIPPAPRGVPQIEVSFDINADGILKVSAKDKSTGKEQSIQIKANSGLSDAEIEAMIKDAEANAEEDRKFEELAKARNEADALISSSNKAVKDLGDKVTEDEKTAVNTAVSELEAATKENDVEAIKAKTEALQNILMPITQRAYEQAQQAGGAEGFDPNAFQGGDAGQQKADDGVVDAEFTEVKDDKK</sequence>
<accession>A3M8W9</accession>
<feature type="chain" id="PRO_1000119654" description="Chaperone protein DnaK">
    <location>
        <begin position="1"/>
        <end position="646"/>
    </location>
</feature>
<feature type="region of interest" description="Disordered" evidence="2">
    <location>
        <begin position="603"/>
        <end position="646"/>
    </location>
</feature>
<feature type="compositionally biased region" description="Low complexity" evidence="2">
    <location>
        <begin position="618"/>
        <end position="627"/>
    </location>
</feature>
<feature type="modified residue" description="Phosphothreonine; by autocatalysis" evidence="1">
    <location>
        <position position="198"/>
    </location>
</feature>
<keyword id="KW-0067">ATP-binding</keyword>
<keyword id="KW-0143">Chaperone</keyword>
<keyword id="KW-0547">Nucleotide-binding</keyword>
<keyword id="KW-0597">Phosphoprotein</keyword>
<keyword id="KW-0346">Stress response</keyword>
<name>DNAK_ACIBT</name>
<evidence type="ECO:0000255" key="1">
    <source>
        <dbReference type="HAMAP-Rule" id="MF_00332"/>
    </source>
</evidence>
<evidence type="ECO:0000256" key="2">
    <source>
        <dbReference type="SAM" id="MobiDB-lite"/>
    </source>
</evidence>
<reference key="1">
    <citation type="journal article" date="2007" name="Genes Dev.">
        <title>New insights into Acinetobacter baumannii pathogenesis revealed by high-density pyrosequencing and transposon mutagenesis.</title>
        <authorList>
            <person name="Smith M.G."/>
            <person name="Gianoulis T.A."/>
            <person name="Pukatzki S."/>
            <person name="Mekalanos J.J."/>
            <person name="Ornston L.N."/>
            <person name="Gerstein M."/>
            <person name="Snyder M."/>
        </authorList>
    </citation>
    <scope>NUCLEOTIDE SEQUENCE [LARGE SCALE GENOMIC DNA]</scope>
    <source>
        <strain>ATCC 17978 / DSM 105126 / CIP 53.77 / LMG 1025 / NCDC KC755 / 5377</strain>
    </source>
</reference>
<organism>
    <name type="scientific">Acinetobacter baumannii (strain ATCC 17978 / DSM 105126 / CIP 53.77 / LMG 1025 / NCDC KC755 / 5377)</name>
    <dbReference type="NCBI Taxonomy" id="400667"/>
    <lineage>
        <taxon>Bacteria</taxon>
        <taxon>Pseudomonadati</taxon>
        <taxon>Pseudomonadota</taxon>
        <taxon>Gammaproteobacteria</taxon>
        <taxon>Moraxellales</taxon>
        <taxon>Moraxellaceae</taxon>
        <taxon>Acinetobacter</taxon>
        <taxon>Acinetobacter calcoaceticus/baumannii complex</taxon>
    </lineage>
</organism>
<comment type="function">
    <text evidence="1">Acts as a chaperone.</text>
</comment>
<comment type="induction">
    <text evidence="1">By stress conditions e.g. heat shock.</text>
</comment>
<comment type="similarity">
    <text evidence="1">Belongs to the heat shock protein 70 family.</text>
</comment>
<proteinExistence type="inferred from homology"/>
<dbReference type="EMBL" id="CP000521">
    <property type="protein sequence ID" value="ABO13363.2"/>
    <property type="molecule type" value="Genomic_DNA"/>
</dbReference>
<dbReference type="RefSeq" id="WP_001062605.1">
    <property type="nucleotide sequence ID" value="NZ_CP053098.1"/>
</dbReference>
<dbReference type="SMR" id="A3M8W9"/>
<dbReference type="GeneID" id="92891966"/>
<dbReference type="KEGG" id="acb:A1S_2960"/>
<dbReference type="HOGENOM" id="CLU_005965_2_1_6"/>
<dbReference type="GO" id="GO:0005524">
    <property type="term" value="F:ATP binding"/>
    <property type="evidence" value="ECO:0007669"/>
    <property type="project" value="UniProtKB-UniRule"/>
</dbReference>
<dbReference type="GO" id="GO:0140662">
    <property type="term" value="F:ATP-dependent protein folding chaperone"/>
    <property type="evidence" value="ECO:0007669"/>
    <property type="project" value="InterPro"/>
</dbReference>
<dbReference type="GO" id="GO:0051082">
    <property type="term" value="F:unfolded protein binding"/>
    <property type="evidence" value="ECO:0007669"/>
    <property type="project" value="InterPro"/>
</dbReference>
<dbReference type="CDD" id="cd10234">
    <property type="entry name" value="ASKHA_NBD_HSP70_DnaK-like"/>
    <property type="match status" value="1"/>
</dbReference>
<dbReference type="FunFam" id="2.60.34.10:FF:000014">
    <property type="entry name" value="Chaperone protein DnaK HSP70"/>
    <property type="match status" value="1"/>
</dbReference>
<dbReference type="FunFam" id="3.30.30.30:FF:000003">
    <property type="entry name" value="Heat shock protein 9"/>
    <property type="match status" value="1"/>
</dbReference>
<dbReference type="FunFam" id="1.20.1270.10:FF:000001">
    <property type="entry name" value="Molecular chaperone DnaK"/>
    <property type="match status" value="1"/>
</dbReference>
<dbReference type="FunFam" id="3.30.420.40:FF:000004">
    <property type="entry name" value="Molecular chaperone DnaK"/>
    <property type="match status" value="1"/>
</dbReference>
<dbReference type="FunFam" id="3.90.640.10:FF:000003">
    <property type="entry name" value="Molecular chaperone DnaK"/>
    <property type="match status" value="1"/>
</dbReference>
<dbReference type="Gene3D" id="1.20.1270.10">
    <property type="match status" value="1"/>
</dbReference>
<dbReference type="Gene3D" id="3.30.420.40">
    <property type="match status" value="2"/>
</dbReference>
<dbReference type="Gene3D" id="3.90.640.10">
    <property type="entry name" value="Actin, Chain A, domain 4"/>
    <property type="match status" value="1"/>
</dbReference>
<dbReference type="Gene3D" id="2.60.34.10">
    <property type="entry name" value="Substrate Binding Domain Of DNAk, Chain A, domain 1"/>
    <property type="match status" value="1"/>
</dbReference>
<dbReference type="HAMAP" id="MF_00332">
    <property type="entry name" value="DnaK"/>
    <property type="match status" value="1"/>
</dbReference>
<dbReference type="InterPro" id="IPR043129">
    <property type="entry name" value="ATPase_NBD"/>
</dbReference>
<dbReference type="InterPro" id="IPR012725">
    <property type="entry name" value="Chaperone_DnaK"/>
</dbReference>
<dbReference type="InterPro" id="IPR018181">
    <property type="entry name" value="Heat_shock_70_CS"/>
</dbReference>
<dbReference type="InterPro" id="IPR029048">
    <property type="entry name" value="HSP70_C_sf"/>
</dbReference>
<dbReference type="InterPro" id="IPR029047">
    <property type="entry name" value="HSP70_peptide-bd_sf"/>
</dbReference>
<dbReference type="InterPro" id="IPR013126">
    <property type="entry name" value="Hsp_70_fam"/>
</dbReference>
<dbReference type="NCBIfam" id="NF001413">
    <property type="entry name" value="PRK00290.1"/>
    <property type="match status" value="1"/>
</dbReference>
<dbReference type="NCBIfam" id="TIGR02350">
    <property type="entry name" value="prok_dnaK"/>
    <property type="match status" value="1"/>
</dbReference>
<dbReference type="PANTHER" id="PTHR19375">
    <property type="entry name" value="HEAT SHOCK PROTEIN 70KDA"/>
    <property type="match status" value="1"/>
</dbReference>
<dbReference type="Pfam" id="PF00012">
    <property type="entry name" value="HSP70"/>
    <property type="match status" value="1"/>
</dbReference>
<dbReference type="PRINTS" id="PR00301">
    <property type="entry name" value="HEATSHOCK70"/>
</dbReference>
<dbReference type="SUPFAM" id="SSF53067">
    <property type="entry name" value="Actin-like ATPase domain"/>
    <property type="match status" value="2"/>
</dbReference>
<dbReference type="SUPFAM" id="SSF100934">
    <property type="entry name" value="Heat shock protein 70kD (HSP70), C-terminal subdomain"/>
    <property type="match status" value="1"/>
</dbReference>
<dbReference type="SUPFAM" id="SSF100920">
    <property type="entry name" value="Heat shock protein 70kD (HSP70), peptide-binding domain"/>
    <property type="match status" value="1"/>
</dbReference>
<dbReference type="PROSITE" id="PS00297">
    <property type="entry name" value="HSP70_1"/>
    <property type="match status" value="1"/>
</dbReference>
<dbReference type="PROSITE" id="PS00329">
    <property type="entry name" value="HSP70_2"/>
    <property type="match status" value="1"/>
</dbReference>
<dbReference type="PROSITE" id="PS01036">
    <property type="entry name" value="HSP70_3"/>
    <property type="match status" value="1"/>
</dbReference>